<name>NBL1_RAT</name>
<comment type="function">
    <text>Possible candidate as a tumor suppressor gene of neuroblastoma. May play an important role in preventing cells from entering the final stage (G1/S) of the transformation process.</text>
</comment>
<comment type="subunit">
    <text evidence="1">Homodimer.</text>
</comment>
<comment type="subcellular location">
    <subcellularLocation>
        <location evidence="1">Secreted</location>
    </subcellularLocation>
</comment>
<comment type="tissue specificity">
    <text>Most abundant in lung, brain, intestine and kidney.</text>
</comment>
<comment type="similarity">
    <text evidence="4">Belongs to the DAN family.</text>
</comment>
<protein>
    <recommendedName>
        <fullName>Neuroblastoma suppressor of tumorigenicity 1</fullName>
    </recommendedName>
    <alternativeName>
        <fullName>N03</fullName>
    </alternativeName>
    <alternativeName>
        <fullName>Zinc finger protein DAN</fullName>
    </alternativeName>
</protein>
<gene>
    <name type="primary">Nbl1</name>
    <name type="synonym">Dan</name>
</gene>
<evidence type="ECO:0000250" key="1"/>
<evidence type="ECO:0000255" key="2"/>
<evidence type="ECO:0000256" key="3">
    <source>
        <dbReference type="SAM" id="MobiDB-lite"/>
    </source>
</evidence>
<evidence type="ECO:0000305" key="4"/>
<dbReference type="EMBL" id="X66872">
    <property type="protein sequence ID" value="CAA47344.1"/>
    <property type="molecule type" value="mRNA"/>
</dbReference>
<dbReference type="EMBL" id="S72637">
    <property type="protein sequence ID" value="AAB32215.1"/>
    <property type="molecule type" value="mRNA"/>
</dbReference>
<dbReference type="EMBL" id="BC061833">
    <property type="protein sequence ID" value="AAH61833.1"/>
    <property type="molecule type" value="mRNA"/>
</dbReference>
<dbReference type="PIR" id="A47291">
    <property type="entry name" value="A47291"/>
</dbReference>
<dbReference type="RefSeq" id="NP_113797.1">
    <property type="nucleotide sequence ID" value="NM_031609.1"/>
</dbReference>
<dbReference type="SMR" id="Q06880"/>
<dbReference type="BioGRID" id="248400">
    <property type="interactions" value="1"/>
</dbReference>
<dbReference type="FunCoup" id="Q06880">
    <property type="interactions" value="298"/>
</dbReference>
<dbReference type="IntAct" id="Q06880">
    <property type="interactions" value="1"/>
</dbReference>
<dbReference type="STRING" id="10116.ENSRNOP00000064345"/>
<dbReference type="PhosphoSitePlus" id="Q06880"/>
<dbReference type="PaxDb" id="10116-ENSRNOP00000064345"/>
<dbReference type="GeneID" id="50594"/>
<dbReference type="KEGG" id="rno:50594"/>
<dbReference type="AGR" id="RGD:3151"/>
<dbReference type="CTD" id="4681"/>
<dbReference type="RGD" id="3151">
    <property type="gene designation" value="Nbl1"/>
</dbReference>
<dbReference type="eggNOG" id="ENOG502RYP0">
    <property type="taxonomic scope" value="Eukaryota"/>
</dbReference>
<dbReference type="InParanoid" id="Q06880"/>
<dbReference type="PhylomeDB" id="Q06880"/>
<dbReference type="PRO" id="PR:Q06880"/>
<dbReference type="Proteomes" id="UP000002494">
    <property type="component" value="Unplaced"/>
</dbReference>
<dbReference type="GO" id="GO:0005615">
    <property type="term" value="C:extracellular space"/>
    <property type="evidence" value="ECO:0000250"/>
    <property type="project" value="UniProtKB"/>
</dbReference>
<dbReference type="GO" id="GO:0036122">
    <property type="term" value="F:BMP binding"/>
    <property type="evidence" value="ECO:0000266"/>
    <property type="project" value="RGD"/>
</dbReference>
<dbReference type="GO" id="GO:0042802">
    <property type="term" value="F:identical protein binding"/>
    <property type="evidence" value="ECO:0000266"/>
    <property type="project" value="RGD"/>
</dbReference>
<dbReference type="GO" id="GO:0016015">
    <property type="term" value="F:morphogen activity"/>
    <property type="evidence" value="ECO:0000266"/>
    <property type="project" value="RGD"/>
</dbReference>
<dbReference type="GO" id="GO:0048018">
    <property type="term" value="F:receptor ligand activity"/>
    <property type="evidence" value="ECO:0000318"/>
    <property type="project" value="GO_Central"/>
</dbReference>
<dbReference type="GO" id="GO:0048263">
    <property type="term" value="P:determination of dorsal identity"/>
    <property type="evidence" value="ECO:0000266"/>
    <property type="project" value="RGD"/>
</dbReference>
<dbReference type="GO" id="GO:0030514">
    <property type="term" value="P:negative regulation of BMP signaling pathway"/>
    <property type="evidence" value="ECO:0000250"/>
    <property type="project" value="UniProtKB"/>
</dbReference>
<dbReference type="GO" id="GO:0090027">
    <property type="term" value="P:negative regulation of monocyte chemotaxis"/>
    <property type="evidence" value="ECO:0000266"/>
    <property type="project" value="RGD"/>
</dbReference>
<dbReference type="GO" id="GO:0007399">
    <property type="term" value="P:nervous system development"/>
    <property type="evidence" value="ECO:0000266"/>
    <property type="project" value="RGD"/>
</dbReference>
<dbReference type="GO" id="GO:0030182">
    <property type="term" value="P:neuron differentiation"/>
    <property type="evidence" value="ECO:0000266"/>
    <property type="project" value="RGD"/>
</dbReference>
<dbReference type="GO" id="GO:0048812">
    <property type="term" value="P:neuron projection morphogenesis"/>
    <property type="evidence" value="ECO:0000266"/>
    <property type="project" value="RGD"/>
</dbReference>
<dbReference type="GO" id="GO:0045666">
    <property type="term" value="P:positive regulation of neuron differentiation"/>
    <property type="evidence" value="ECO:0000266"/>
    <property type="project" value="RGD"/>
</dbReference>
<dbReference type="GO" id="GO:0038098">
    <property type="term" value="P:sequestering of BMP from receptor via BMP binding"/>
    <property type="evidence" value="ECO:0000266"/>
    <property type="project" value="RGD"/>
</dbReference>
<dbReference type="GO" id="GO:0035582">
    <property type="term" value="P:sequestering of BMP in extracellular matrix"/>
    <property type="evidence" value="ECO:0000266"/>
    <property type="project" value="RGD"/>
</dbReference>
<dbReference type="FunFam" id="2.10.90.10:FF:000016">
    <property type="entry name" value="Neuroblastoma suppressor of tumorigenicity 1"/>
    <property type="match status" value="1"/>
</dbReference>
<dbReference type="Gene3D" id="2.10.90.10">
    <property type="entry name" value="Cystine-knot cytokines"/>
    <property type="match status" value="1"/>
</dbReference>
<dbReference type="InterPro" id="IPR006207">
    <property type="entry name" value="Cys_knot_C"/>
</dbReference>
<dbReference type="InterPro" id="IPR029034">
    <property type="entry name" value="Cystine-knot_cytokine"/>
</dbReference>
<dbReference type="InterPro" id="IPR004133">
    <property type="entry name" value="DAN"/>
</dbReference>
<dbReference type="InterPro" id="IPR016728">
    <property type="entry name" value="Neuroblast_suppress_tumour_1"/>
</dbReference>
<dbReference type="PANTHER" id="PTHR15283">
    <property type="entry name" value="GREMLIN 1"/>
    <property type="match status" value="1"/>
</dbReference>
<dbReference type="PANTHER" id="PTHR15283:SF5">
    <property type="entry name" value="NEUROBLASTOMA SUPPRESSOR OF TUMORIGENICITY 1"/>
    <property type="match status" value="1"/>
</dbReference>
<dbReference type="Pfam" id="PF03045">
    <property type="entry name" value="DAN"/>
    <property type="match status" value="1"/>
</dbReference>
<dbReference type="PIRSF" id="PIRSF018557">
    <property type="entry name" value="DAN_sub"/>
    <property type="match status" value="1"/>
</dbReference>
<dbReference type="SMART" id="SM00041">
    <property type="entry name" value="CT"/>
    <property type="match status" value="1"/>
</dbReference>
<accession>Q06880</accession>
<accession>Q6P750</accession>
<proteinExistence type="evidence at transcript level"/>
<sequence length="178" mass="19191">MLWVLVGTVLPVMLLAAPPPINKLALFPDKSAWCEAKNITQIVGHSGCEAKSIQNRACLGQCFSYSVPNTFPQSTESLVHCDSCMPAQSMWEIVTLECPGHEEVPRVDKLVEKIVHCSCQACGKEPSHEGLNVYMQGEDGPGSQPGSHSHSHPHPGCQTPEPEEPPGAPQVEEEGAED</sequence>
<organism>
    <name type="scientific">Rattus norvegicus</name>
    <name type="common">Rat</name>
    <dbReference type="NCBI Taxonomy" id="10116"/>
    <lineage>
        <taxon>Eukaryota</taxon>
        <taxon>Metazoa</taxon>
        <taxon>Chordata</taxon>
        <taxon>Craniata</taxon>
        <taxon>Vertebrata</taxon>
        <taxon>Euteleostomi</taxon>
        <taxon>Mammalia</taxon>
        <taxon>Eutheria</taxon>
        <taxon>Euarchontoglires</taxon>
        <taxon>Glires</taxon>
        <taxon>Rodentia</taxon>
        <taxon>Myomorpha</taxon>
        <taxon>Muroidea</taxon>
        <taxon>Muridae</taxon>
        <taxon>Murinae</taxon>
        <taxon>Rattus</taxon>
    </lineage>
</organism>
<feature type="signal peptide" evidence="2">
    <location>
        <begin position="1"/>
        <end position="16"/>
    </location>
</feature>
<feature type="chain" id="PRO_0000006724" description="Neuroblastoma suppressor of tumorigenicity 1">
    <location>
        <begin position="17"/>
        <end position="178"/>
    </location>
</feature>
<feature type="domain" description="CTCK">
    <location>
        <begin position="34"/>
        <end position="123"/>
    </location>
</feature>
<feature type="region of interest" description="Disordered" evidence="3">
    <location>
        <begin position="130"/>
        <end position="178"/>
    </location>
</feature>
<feature type="disulfide bond" evidence="1">
    <location>
        <begin position="34"/>
        <end position="84"/>
    </location>
</feature>
<feature type="disulfide bond" evidence="1">
    <location>
        <begin position="48"/>
        <end position="98"/>
    </location>
</feature>
<feature type="disulfide bond" evidence="1">
    <location>
        <begin position="58"/>
        <end position="117"/>
    </location>
</feature>
<feature type="disulfide bond" evidence="1">
    <location>
        <begin position="62"/>
        <end position="119"/>
    </location>
</feature>
<feature type="disulfide bond" evidence="2">
    <location>
        <begin position="81"/>
        <end position="122"/>
    </location>
</feature>
<feature type="sequence conflict" description="In Ref. 3; AAH61833." evidence="4" ref="3">
    <original>C</original>
    <variation>G</variation>
    <location>
        <position position="157"/>
    </location>
</feature>
<reference key="1">
    <citation type="journal article" date="1993" name="Proc. Natl. Acad. Sci. U.S.A.">
        <title>Molecular cloning and characterization of a cDNA showing negative regulation in v-src-transformed 3Y1 rat fibroblasts.</title>
        <authorList>
            <person name="Ozaki T."/>
            <person name="Sakiyama S."/>
        </authorList>
    </citation>
    <scope>NUCLEOTIDE SEQUENCE [MRNA]</scope>
</reference>
<reference key="2">
    <citation type="journal article" date="1994" name="Adv. Enzyme Regul.">
        <title>Molecular cloning and characterization of a cDNA showing tumor-suppressive activity in V-SRC-transformed 3Y1 rat fibroblasts.</title>
        <authorList>
            <person name="Sakiyama S."/>
            <person name="Ozaki T."/>
            <person name="Enomoto H."/>
        </authorList>
    </citation>
    <scope>NUCLEOTIDE SEQUENCE [MRNA]</scope>
</reference>
<reference key="3">
    <citation type="journal article" date="2004" name="Genome Res.">
        <title>The status, quality, and expansion of the NIH full-length cDNA project: the Mammalian Gene Collection (MGC).</title>
        <authorList>
            <consortium name="The MGC Project Team"/>
        </authorList>
    </citation>
    <scope>NUCLEOTIDE SEQUENCE [LARGE SCALE MRNA]</scope>
    <source>
        <tissue>Prostate</tissue>
    </source>
</reference>
<keyword id="KW-1015">Disulfide bond</keyword>
<keyword id="KW-1185">Reference proteome</keyword>
<keyword id="KW-0964">Secreted</keyword>
<keyword id="KW-0732">Signal</keyword>
<keyword id="KW-0043">Tumor suppressor</keyword>